<keyword id="KW-0067">ATP-binding</keyword>
<keyword id="KW-0332">GMP biosynthesis</keyword>
<keyword id="KW-0436">Ligase</keyword>
<keyword id="KW-0547">Nucleotide-binding</keyword>
<keyword id="KW-0658">Purine biosynthesis</keyword>
<reference key="1">
    <citation type="journal article" date="2009" name="Stand. Genomic Sci.">
        <title>Complete genome sequence of Methanoculleus marisnigri Romesser et al. 1981 type strain JR1.</title>
        <authorList>
            <person name="Anderson I.J."/>
            <person name="Sieprawska-Lupa M."/>
            <person name="Lapidus A."/>
            <person name="Nolan M."/>
            <person name="Copeland A."/>
            <person name="Glavina Del Rio T."/>
            <person name="Tice H."/>
            <person name="Dalin E."/>
            <person name="Barry K."/>
            <person name="Saunders E."/>
            <person name="Han C."/>
            <person name="Brettin T."/>
            <person name="Detter J.C."/>
            <person name="Bruce D."/>
            <person name="Mikhailova N."/>
            <person name="Pitluck S."/>
            <person name="Hauser L."/>
            <person name="Land M."/>
            <person name="Lucas S."/>
            <person name="Richardson P."/>
            <person name="Whitman W.B."/>
            <person name="Kyrpides N.C."/>
        </authorList>
    </citation>
    <scope>NUCLEOTIDE SEQUENCE [LARGE SCALE GENOMIC DNA]</scope>
    <source>
        <strain>ATCC 35101 / DSM 1498 / JR1</strain>
    </source>
</reference>
<sequence length="305" mass="33177">MVNIEKFIDQAVREIRDAAGEDKVVMALSGGVDSSVCAALATRAIGDQLVPIYVDTGLMRKGETDRIRSLFADANLRVVDAADEFFEALAGIVDPEEKRKAIGAKFIRIFEREAKRTGATMLLQGTIYPDRIESEGGIKSHHNVGGMPLDIEFKGVIEPLADLYKDEVREVAGGLGLPAEIQHRMPFPGPGLAVRVLGEVTKEKIAIVREANAIVEECLVEEFRPWQCFAALIGLGTGVKGDVRLHGWIVAVRAVGSRDGMTADPLLLPYETLSRMATRITAEIPGVARVVYDVTPKPPATIEYE</sequence>
<comment type="function">
    <text evidence="1">Catalyzes the synthesis of GMP from XMP.</text>
</comment>
<comment type="catalytic activity">
    <reaction evidence="1">
        <text>XMP + L-glutamine + ATP + H2O = GMP + L-glutamate + AMP + diphosphate + 2 H(+)</text>
        <dbReference type="Rhea" id="RHEA:11680"/>
        <dbReference type="ChEBI" id="CHEBI:15377"/>
        <dbReference type="ChEBI" id="CHEBI:15378"/>
        <dbReference type="ChEBI" id="CHEBI:29985"/>
        <dbReference type="ChEBI" id="CHEBI:30616"/>
        <dbReference type="ChEBI" id="CHEBI:33019"/>
        <dbReference type="ChEBI" id="CHEBI:57464"/>
        <dbReference type="ChEBI" id="CHEBI:58115"/>
        <dbReference type="ChEBI" id="CHEBI:58359"/>
        <dbReference type="ChEBI" id="CHEBI:456215"/>
        <dbReference type="EC" id="6.3.5.2"/>
    </reaction>
</comment>
<comment type="pathway">
    <text evidence="1">Purine metabolism; GMP biosynthesis; GMP from XMP (L-Gln route): step 1/1.</text>
</comment>
<comment type="subunit">
    <text evidence="1">Heterodimer composed of a glutamine amidotransferase subunit (A) and a GMP-binding subunit (B).</text>
</comment>
<proteinExistence type="inferred from homology"/>
<feature type="chain" id="PRO_1000048379" description="GMP synthase [glutamine-hydrolyzing] subunit B">
    <location>
        <begin position="1"/>
        <end position="305"/>
    </location>
</feature>
<feature type="domain" description="GMPS ATP-PPase" evidence="1">
    <location>
        <begin position="2"/>
        <end position="184"/>
    </location>
</feature>
<feature type="binding site" evidence="1">
    <location>
        <begin position="29"/>
        <end position="35"/>
    </location>
    <ligand>
        <name>ATP</name>
        <dbReference type="ChEBI" id="CHEBI:30616"/>
    </ligand>
</feature>
<evidence type="ECO:0000255" key="1">
    <source>
        <dbReference type="HAMAP-Rule" id="MF_00345"/>
    </source>
</evidence>
<organism>
    <name type="scientific">Methanoculleus marisnigri (strain ATCC 35101 / DSM 1498 / JR1)</name>
    <dbReference type="NCBI Taxonomy" id="368407"/>
    <lineage>
        <taxon>Archaea</taxon>
        <taxon>Methanobacteriati</taxon>
        <taxon>Methanobacteriota</taxon>
        <taxon>Stenosarchaea group</taxon>
        <taxon>Methanomicrobia</taxon>
        <taxon>Methanomicrobiales</taxon>
        <taxon>Methanomicrobiaceae</taxon>
        <taxon>Methanoculleus</taxon>
    </lineage>
</organism>
<protein>
    <recommendedName>
        <fullName evidence="1">GMP synthase [glutamine-hydrolyzing] subunit B</fullName>
        <ecNumber evidence="1">6.3.5.2</ecNumber>
    </recommendedName>
    <alternativeName>
        <fullName evidence="1">GMP synthetase</fullName>
    </alternativeName>
</protein>
<name>GUAAB_METMJ</name>
<accession>A3CWS6</accession>
<gene>
    <name evidence="1" type="primary">guaAB</name>
    <name type="ordered locus">Memar_1900</name>
</gene>
<dbReference type="EC" id="6.3.5.2" evidence="1"/>
<dbReference type="EMBL" id="CP000562">
    <property type="protein sequence ID" value="ABN57826.1"/>
    <property type="molecule type" value="Genomic_DNA"/>
</dbReference>
<dbReference type="RefSeq" id="WP_011844735.1">
    <property type="nucleotide sequence ID" value="NC_009051.1"/>
</dbReference>
<dbReference type="SMR" id="A3CWS6"/>
<dbReference type="STRING" id="368407.Memar_1900"/>
<dbReference type="GeneID" id="4848091"/>
<dbReference type="KEGG" id="mem:Memar_1900"/>
<dbReference type="eggNOG" id="arCOG00085">
    <property type="taxonomic scope" value="Archaea"/>
</dbReference>
<dbReference type="HOGENOM" id="CLU_014340_0_0_2"/>
<dbReference type="OrthoDB" id="33844at2157"/>
<dbReference type="UniPathway" id="UPA00189">
    <property type="reaction ID" value="UER00296"/>
</dbReference>
<dbReference type="Proteomes" id="UP000002146">
    <property type="component" value="Chromosome"/>
</dbReference>
<dbReference type="GO" id="GO:0005829">
    <property type="term" value="C:cytosol"/>
    <property type="evidence" value="ECO:0007669"/>
    <property type="project" value="TreeGrafter"/>
</dbReference>
<dbReference type="GO" id="GO:0005524">
    <property type="term" value="F:ATP binding"/>
    <property type="evidence" value="ECO:0007669"/>
    <property type="project" value="UniProtKB-UniRule"/>
</dbReference>
<dbReference type="GO" id="GO:0003921">
    <property type="term" value="F:GMP synthase activity"/>
    <property type="evidence" value="ECO:0007669"/>
    <property type="project" value="InterPro"/>
</dbReference>
<dbReference type="CDD" id="cd01997">
    <property type="entry name" value="GMP_synthase_C"/>
    <property type="match status" value="1"/>
</dbReference>
<dbReference type="FunFam" id="3.40.50.620:FF:000208">
    <property type="entry name" value="GMP synthase [glutamine-hydrolyzing] subunit B"/>
    <property type="match status" value="1"/>
</dbReference>
<dbReference type="Gene3D" id="3.30.300.10">
    <property type="match status" value="1"/>
</dbReference>
<dbReference type="Gene3D" id="3.40.50.620">
    <property type="entry name" value="HUPs"/>
    <property type="match status" value="1"/>
</dbReference>
<dbReference type="HAMAP" id="MF_00345">
    <property type="entry name" value="GMP_synthase_B"/>
    <property type="match status" value="1"/>
</dbReference>
<dbReference type="InterPro" id="IPR001674">
    <property type="entry name" value="GMP_synth_C"/>
</dbReference>
<dbReference type="InterPro" id="IPR026598">
    <property type="entry name" value="GMP_synthase_B"/>
</dbReference>
<dbReference type="InterPro" id="IPR025777">
    <property type="entry name" value="GMPS_ATP_PPase_dom"/>
</dbReference>
<dbReference type="InterPro" id="IPR022310">
    <property type="entry name" value="NAD/GMP_synthase"/>
</dbReference>
<dbReference type="InterPro" id="IPR014729">
    <property type="entry name" value="Rossmann-like_a/b/a_fold"/>
</dbReference>
<dbReference type="NCBIfam" id="TIGR00884">
    <property type="entry name" value="guaA_Cterm"/>
    <property type="match status" value="1"/>
</dbReference>
<dbReference type="PANTHER" id="PTHR11922:SF2">
    <property type="entry name" value="GMP SYNTHASE [GLUTAMINE-HYDROLYZING]"/>
    <property type="match status" value="1"/>
</dbReference>
<dbReference type="PANTHER" id="PTHR11922">
    <property type="entry name" value="GMP SYNTHASE-RELATED"/>
    <property type="match status" value="1"/>
</dbReference>
<dbReference type="Pfam" id="PF00958">
    <property type="entry name" value="GMP_synt_C"/>
    <property type="match status" value="1"/>
</dbReference>
<dbReference type="Pfam" id="PF02540">
    <property type="entry name" value="NAD_synthase"/>
    <property type="match status" value="1"/>
</dbReference>
<dbReference type="SUPFAM" id="SSF52402">
    <property type="entry name" value="Adenine nucleotide alpha hydrolases-like"/>
    <property type="match status" value="1"/>
</dbReference>
<dbReference type="SUPFAM" id="SSF54810">
    <property type="entry name" value="GMP synthetase C-terminal dimerisation domain"/>
    <property type="match status" value="1"/>
</dbReference>
<dbReference type="PROSITE" id="PS51553">
    <property type="entry name" value="GMPS_ATP_PPASE"/>
    <property type="match status" value="1"/>
</dbReference>